<organism>
    <name type="scientific">Invertebrate iridescent virus 6</name>
    <name type="common">IIV-6</name>
    <name type="synonym">Chilo iridescent virus</name>
    <dbReference type="NCBI Taxonomy" id="176652"/>
    <lineage>
        <taxon>Viruses</taxon>
        <taxon>Varidnaviria</taxon>
        <taxon>Bamfordvirae</taxon>
        <taxon>Nucleocytoviricota</taxon>
        <taxon>Megaviricetes</taxon>
        <taxon>Pimascovirales</taxon>
        <taxon>Iridoviridae</taxon>
        <taxon>Betairidovirinae</taxon>
        <taxon>Iridovirus</taxon>
    </lineage>
</organism>
<sequence length="220" mass="26172">MEVGCVYIITTQLYEPLDIYKIGCTKDINRRLKTMNASRISFDKFFIVNQIQTFHYFKLEQGLHKLLKKYRLNNEFFQCNVNIIEKAISDYANNNVFMLHDDKIAHVAIEKKLKWFQKNNLFSITDTNLEIFLNESSLINEIKQWLSVFDKHNLYKFLHPSHFYNIVSYLKTVCIQNDDEEEFLINEMNMLSINTKDDNSKDDNNDSEDLSKQIDNLKLD</sequence>
<gene>
    <name type="ORF">IIV6-460R</name>
</gene>
<name>460R_IIV6</name>
<organismHost>
    <name type="scientific">Acheta domesticus</name>
    <name type="common">House cricket</name>
    <dbReference type="NCBI Taxonomy" id="6997"/>
</organismHost>
<organismHost>
    <name type="scientific">Chilo suppressalis</name>
    <name type="common">Asiatic rice borer moth</name>
    <dbReference type="NCBI Taxonomy" id="168631"/>
</organismHost>
<organismHost>
    <name type="scientific">Gryllus bimaculatus</name>
    <name type="common">Two-spotted cricket</name>
    <dbReference type="NCBI Taxonomy" id="6999"/>
</organismHost>
<organismHost>
    <name type="scientific">Gryllus campestris</name>
    <dbReference type="NCBI Taxonomy" id="58607"/>
</organismHost>
<organismHost>
    <name type="scientific">Spodoptera frugiperda</name>
    <name type="common">Fall armyworm</name>
    <dbReference type="NCBI Taxonomy" id="7108"/>
</organismHost>
<dbReference type="EMBL" id="AF303741">
    <property type="protein sequence ID" value="AAK82320.1"/>
    <property type="molecule type" value="Genomic_DNA"/>
</dbReference>
<dbReference type="RefSeq" id="NP_149923.1">
    <property type="nucleotide sequence ID" value="NC_003038.1"/>
</dbReference>
<dbReference type="KEGG" id="vg:1733022"/>
<dbReference type="OrthoDB" id="8240at10239"/>
<dbReference type="Proteomes" id="UP000001359">
    <property type="component" value="Genome"/>
</dbReference>
<dbReference type="InterPro" id="IPR018306">
    <property type="entry name" value="Phage_T5_Orf172_DNA-bd"/>
</dbReference>
<dbReference type="Pfam" id="PF10544">
    <property type="entry name" value="T5orf172"/>
    <property type="match status" value="1"/>
</dbReference>
<dbReference type="SMART" id="SM00974">
    <property type="entry name" value="T5orf172"/>
    <property type="match status" value="1"/>
</dbReference>
<accession>Q91F66</accession>
<feature type="chain" id="PRO_0000377896" description="Uncharacterized protein 460R">
    <location>
        <begin position="1"/>
        <end position="220"/>
    </location>
</feature>
<feature type="region of interest" description="Disordered" evidence="1">
    <location>
        <begin position="196"/>
        <end position="220"/>
    </location>
</feature>
<proteinExistence type="predicted"/>
<evidence type="ECO:0000256" key="1">
    <source>
        <dbReference type="SAM" id="MobiDB-lite"/>
    </source>
</evidence>
<protein>
    <recommendedName>
        <fullName>Uncharacterized protein 460R</fullName>
    </recommendedName>
</protein>
<keyword id="KW-1185">Reference proteome</keyword>
<reference key="1">
    <citation type="journal article" date="2001" name="Virology">
        <title>Analysis of the first complete DNA sequence of an invertebrate iridovirus: coding strategy of the genome of Chilo iridescent virus.</title>
        <authorList>
            <person name="Jakob N.J."/>
            <person name="Mueller K."/>
            <person name="Bahr U."/>
            <person name="Darai G."/>
        </authorList>
    </citation>
    <scope>NUCLEOTIDE SEQUENCE [LARGE SCALE GENOMIC DNA]</scope>
</reference>
<reference key="2">
    <citation type="journal article" date="2007" name="Virol. J.">
        <title>Comparative genomic analysis of the family Iridoviridae: re-annotating and defining the core set of iridovirus genes.</title>
        <authorList>
            <person name="Eaton H.E."/>
            <person name="Metcalf J."/>
            <person name="Penny E."/>
            <person name="Tcherepanov V."/>
            <person name="Upton C."/>
            <person name="Brunetti C.R."/>
        </authorList>
    </citation>
    <scope>GENOME REANNOTATION</scope>
</reference>